<reference key="1">
    <citation type="submission" date="2008-01" db="EMBL/GenBank/DDBJ databases">
        <title>Complete sequence of chromosome of Caulobacter sp. K31.</title>
        <authorList>
            <consortium name="US DOE Joint Genome Institute"/>
            <person name="Copeland A."/>
            <person name="Lucas S."/>
            <person name="Lapidus A."/>
            <person name="Barry K."/>
            <person name="Glavina del Rio T."/>
            <person name="Dalin E."/>
            <person name="Tice H."/>
            <person name="Pitluck S."/>
            <person name="Bruce D."/>
            <person name="Goodwin L."/>
            <person name="Thompson L.S."/>
            <person name="Brettin T."/>
            <person name="Detter J.C."/>
            <person name="Han C."/>
            <person name="Schmutz J."/>
            <person name="Larimer F."/>
            <person name="Land M."/>
            <person name="Hauser L."/>
            <person name="Kyrpides N."/>
            <person name="Kim E."/>
            <person name="Stephens C."/>
            <person name="Richardson P."/>
        </authorList>
    </citation>
    <scope>NUCLEOTIDE SEQUENCE [LARGE SCALE GENOMIC DNA]</scope>
    <source>
        <strain>K31</strain>
    </source>
</reference>
<protein>
    <recommendedName>
        <fullName evidence="1">UPF0335 protein Caul_0876</fullName>
    </recommendedName>
</protein>
<gene>
    <name type="ordered locus">Caul_0876</name>
</gene>
<dbReference type="EMBL" id="CP000927">
    <property type="protein sequence ID" value="ABZ70007.1"/>
    <property type="molecule type" value="Genomic_DNA"/>
</dbReference>
<dbReference type="SMR" id="B0SVG8"/>
<dbReference type="STRING" id="366602.Caul_0876"/>
<dbReference type="KEGG" id="cak:Caul_0876"/>
<dbReference type="eggNOG" id="COG3750">
    <property type="taxonomic scope" value="Bacteria"/>
</dbReference>
<dbReference type="HOGENOM" id="CLU_158651_3_0_5"/>
<dbReference type="OrthoDB" id="9813793at2"/>
<dbReference type="GO" id="GO:0003677">
    <property type="term" value="F:DNA binding"/>
    <property type="evidence" value="ECO:0007669"/>
    <property type="project" value="InterPro"/>
</dbReference>
<dbReference type="HAMAP" id="MF_00797">
    <property type="entry name" value="UPF0335"/>
    <property type="match status" value="1"/>
</dbReference>
<dbReference type="InterPro" id="IPR018753">
    <property type="entry name" value="GapR-like"/>
</dbReference>
<dbReference type="InterPro" id="IPR046367">
    <property type="entry name" value="GapR-like_DNA-bd"/>
</dbReference>
<dbReference type="NCBIfam" id="NF010247">
    <property type="entry name" value="PRK13694.1"/>
    <property type="match status" value="1"/>
</dbReference>
<dbReference type="Pfam" id="PF10073">
    <property type="entry name" value="GapR_DNA-bd"/>
    <property type="match status" value="1"/>
</dbReference>
<comment type="similarity">
    <text evidence="1">Belongs to the UPF0335 family.</text>
</comment>
<accession>B0SVG8</accession>
<evidence type="ECO:0000255" key="1">
    <source>
        <dbReference type="HAMAP-Rule" id="MF_00797"/>
    </source>
</evidence>
<sequence length="89" mass="10049">MADDAAPHADVLNSTAQGQLKSIIDRVERLEVEKTEIAEQIKEVYLEAKGNGFDVKILRKVVRLRKTDRAKRQEEDAILDLYLSAIGEI</sequence>
<feature type="chain" id="PRO_1000083683" description="UPF0335 protein Caul_0876">
    <location>
        <begin position="1"/>
        <end position="89"/>
    </location>
</feature>
<organism>
    <name type="scientific">Caulobacter sp. (strain K31)</name>
    <dbReference type="NCBI Taxonomy" id="366602"/>
    <lineage>
        <taxon>Bacteria</taxon>
        <taxon>Pseudomonadati</taxon>
        <taxon>Pseudomonadota</taxon>
        <taxon>Alphaproteobacteria</taxon>
        <taxon>Caulobacterales</taxon>
        <taxon>Caulobacteraceae</taxon>
        <taxon>Caulobacter</taxon>
    </lineage>
</organism>
<name>Y876_CAUSK</name>
<proteinExistence type="inferred from homology"/>